<protein>
    <recommendedName>
        <fullName evidence="1">NADH-quinone oxidoreductase subunit N</fullName>
        <ecNumber evidence="1">7.1.1.-</ecNumber>
    </recommendedName>
    <alternativeName>
        <fullName evidence="1">NADH dehydrogenase I subunit N</fullName>
    </alternativeName>
    <alternativeName>
        <fullName evidence="1">NDH-1 subunit N</fullName>
    </alternativeName>
</protein>
<organism>
    <name type="scientific">Gluconacetobacter diazotrophicus (strain ATCC 49037 / DSM 5601 / CCUG 37298 / CIP 103539 / LMG 7603 / PAl5)</name>
    <dbReference type="NCBI Taxonomy" id="272568"/>
    <lineage>
        <taxon>Bacteria</taxon>
        <taxon>Pseudomonadati</taxon>
        <taxon>Pseudomonadota</taxon>
        <taxon>Alphaproteobacteria</taxon>
        <taxon>Acetobacterales</taxon>
        <taxon>Acetobacteraceae</taxon>
        <taxon>Gluconacetobacter</taxon>
    </lineage>
</organism>
<feature type="chain" id="PRO_0000391155" description="NADH-quinone oxidoreductase subunit N">
    <location>
        <begin position="1"/>
        <end position="475"/>
    </location>
</feature>
<feature type="transmembrane region" description="Helical" evidence="1">
    <location>
        <begin position="5"/>
        <end position="25"/>
    </location>
</feature>
<feature type="transmembrane region" description="Helical" evidence="1">
    <location>
        <begin position="32"/>
        <end position="52"/>
    </location>
</feature>
<feature type="transmembrane region" description="Helical" evidence="1">
    <location>
        <begin position="71"/>
        <end position="91"/>
    </location>
</feature>
<feature type="transmembrane region" description="Helical" evidence="1">
    <location>
        <begin position="99"/>
        <end position="119"/>
    </location>
</feature>
<feature type="transmembrane region" description="Helical" evidence="1">
    <location>
        <begin position="121"/>
        <end position="141"/>
    </location>
</feature>
<feature type="transmembrane region" description="Helical" evidence="1">
    <location>
        <begin position="155"/>
        <end position="175"/>
    </location>
</feature>
<feature type="transmembrane region" description="Helical" evidence="1">
    <location>
        <begin position="193"/>
        <end position="213"/>
    </location>
</feature>
<feature type="transmembrane region" description="Helical" evidence="1">
    <location>
        <begin position="232"/>
        <end position="252"/>
    </location>
</feature>
<feature type="transmembrane region" description="Helical" evidence="1">
    <location>
        <begin position="266"/>
        <end position="286"/>
    </location>
</feature>
<feature type="transmembrane region" description="Helical" evidence="1">
    <location>
        <begin position="294"/>
        <end position="314"/>
    </location>
</feature>
<feature type="transmembrane region" description="Helical" evidence="1">
    <location>
        <begin position="322"/>
        <end position="342"/>
    </location>
</feature>
<feature type="transmembrane region" description="Helical" evidence="1">
    <location>
        <begin position="366"/>
        <end position="386"/>
    </location>
</feature>
<feature type="transmembrane region" description="Helical" evidence="1">
    <location>
        <begin position="389"/>
        <end position="409"/>
    </location>
</feature>
<feature type="transmembrane region" description="Helical" evidence="1">
    <location>
        <begin position="439"/>
        <end position="459"/>
    </location>
</feature>
<proteinExistence type="inferred from homology"/>
<dbReference type="EC" id="7.1.1.-" evidence="1"/>
<dbReference type="EMBL" id="CP001189">
    <property type="protein sequence ID" value="ACI53067.1"/>
    <property type="molecule type" value="Genomic_DNA"/>
</dbReference>
<dbReference type="EMBL" id="AM889285">
    <property type="protein sequence ID" value="CAP56971.1"/>
    <property type="molecule type" value="Genomic_DNA"/>
</dbReference>
<dbReference type="RefSeq" id="WP_012227309.1">
    <property type="nucleotide sequence ID" value="NC_010125.1"/>
</dbReference>
<dbReference type="SMR" id="A9HRS3"/>
<dbReference type="STRING" id="272568.GDI3028"/>
<dbReference type="KEGG" id="gdi:GDI3028"/>
<dbReference type="KEGG" id="gdj:Gdia_3340"/>
<dbReference type="eggNOG" id="COG1007">
    <property type="taxonomic scope" value="Bacteria"/>
</dbReference>
<dbReference type="HOGENOM" id="CLU_007100_1_3_5"/>
<dbReference type="OrthoDB" id="9811718at2"/>
<dbReference type="Proteomes" id="UP000001176">
    <property type="component" value="Chromosome"/>
</dbReference>
<dbReference type="GO" id="GO:0005886">
    <property type="term" value="C:plasma membrane"/>
    <property type="evidence" value="ECO:0007669"/>
    <property type="project" value="UniProtKB-SubCell"/>
</dbReference>
<dbReference type="GO" id="GO:0008137">
    <property type="term" value="F:NADH dehydrogenase (ubiquinone) activity"/>
    <property type="evidence" value="ECO:0007669"/>
    <property type="project" value="InterPro"/>
</dbReference>
<dbReference type="GO" id="GO:0050136">
    <property type="term" value="F:NADH:ubiquinone reductase (non-electrogenic) activity"/>
    <property type="evidence" value="ECO:0007669"/>
    <property type="project" value="UniProtKB-UniRule"/>
</dbReference>
<dbReference type="GO" id="GO:0048038">
    <property type="term" value="F:quinone binding"/>
    <property type="evidence" value="ECO:0007669"/>
    <property type="project" value="UniProtKB-KW"/>
</dbReference>
<dbReference type="GO" id="GO:0042773">
    <property type="term" value="P:ATP synthesis coupled electron transport"/>
    <property type="evidence" value="ECO:0007669"/>
    <property type="project" value="InterPro"/>
</dbReference>
<dbReference type="HAMAP" id="MF_00445">
    <property type="entry name" value="NDH1_NuoN_1"/>
    <property type="match status" value="1"/>
</dbReference>
<dbReference type="InterPro" id="IPR010096">
    <property type="entry name" value="NADH-Q_OxRdtase_suN/2"/>
</dbReference>
<dbReference type="InterPro" id="IPR001750">
    <property type="entry name" value="ND/Mrp_TM"/>
</dbReference>
<dbReference type="NCBIfam" id="TIGR01770">
    <property type="entry name" value="NDH_I_N"/>
    <property type="match status" value="1"/>
</dbReference>
<dbReference type="NCBIfam" id="NF004440">
    <property type="entry name" value="PRK05777.1-3"/>
    <property type="match status" value="1"/>
</dbReference>
<dbReference type="PANTHER" id="PTHR22773">
    <property type="entry name" value="NADH DEHYDROGENASE"/>
    <property type="match status" value="1"/>
</dbReference>
<dbReference type="Pfam" id="PF00361">
    <property type="entry name" value="Proton_antipo_M"/>
    <property type="match status" value="1"/>
</dbReference>
<sequence>MNWTLALPEIVLALCGLAILVFGVVQKKEQPFLSCSMLTIGAFVLTGFLVVMSPDGVGYNHIFVNDDFARFMKILSLAGGAFATMLTVGYARNMKVERFEFPVLLLFSTLGAMMMASSENLMTLFIGLELSSLAIYILCAFARDEVRGGEAGLKYFVLGSLASGLLLYGSSLVYGYAGTMEYGGIQMALSTSSTAVPMGLMFGIVFMLAGLTFKLSAVPFHMWTPDVYQGAPTSVTAYMAGAPKFAAFALLLRVMAGPFGHVAPQWQILVEGVSMLSMLFGSLAAIPQTDIKRLMAYSSIGHMGYALMGLCAGTAEGMRGTLVYLTTYLLMNVGAFAVIIAMRRKGREVTGIADLAGLGKTDPGLATAMAIFMFSMAGAPPLAGFFGKMMVFYAAINAHLFGLAAIGVVSSVIGGYYYVRIVKVMFFDDAAAPLDRRPLSLSFVSVGMGIATTGFLLVLGPVSSAAQAAAQALFR</sequence>
<keyword id="KW-0997">Cell inner membrane</keyword>
<keyword id="KW-1003">Cell membrane</keyword>
<keyword id="KW-0472">Membrane</keyword>
<keyword id="KW-0520">NAD</keyword>
<keyword id="KW-0874">Quinone</keyword>
<keyword id="KW-1185">Reference proteome</keyword>
<keyword id="KW-1278">Translocase</keyword>
<keyword id="KW-0812">Transmembrane</keyword>
<keyword id="KW-1133">Transmembrane helix</keyword>
<keyword id="KW-0813">Transport</keyword>
<keyword id="KW-0830">Ubiquinone</keyword>
<reference key="1">
    <citation type="journal article" date="2009" name="BMC Genomics">
        <title>Complete genome sequence of the sugarcane nitrogen-fixing endophyte Gluconacetobacter diazotrophicus Pal5.</title>
        <authorList>
            <person name="Bertalan M."/>
            <person name="Albano R."/>
            <person name="de Padua V."/>
            <person name="Rouws L."/>
            <person name="Rojas C."/>
            <person name="Hemerly A."/>
            <person name="Teixeira K."/>
            <person name="Schwab S."/>
            <person name="Araujo J."/>
            <person name="Oliveira A."/>
            <person name="Franca L."/>
            <person name="Magalhaes V."/>
            <person name="Alqueres S."/>
            <person name="Cardoso A."/>
            <person name="Almeida W."/>
            <person name="Loureiro M.M."/>
            <person name="Nogueira E."/>
            <person name="Cidade D."/>
            <person name="Oliveira D."/>
            <person name="Simao T."/>
            <person name="Macedo J."/>
            <person name="Valadao A."/>
            <person name="Dreschsel M."/>
            <person name="Freitas F."/>
            <person name="Vidal M."/>
            <person name="Guedes H."/>
            <person name="Rodrigues E."/>
            <person name="Meneses C."/>
            <person name="Brioso P."/>
            <person name="Pozzer L."/>
            <person name="Figueiredo D."/>
            <person name="Montano H."/>
            <person name="Junior J."/>
            <person name="de Souza Filho G."/>
            <person name="Martin Quintana Flores V."/>
            <person name="Ferreira B."/>
            <person name="Branco A."/>
            <person name="Gonzalez P."/>
            <person name="Guillobel H."/>
            <person name="Lemos M."/>
            <person name="Seibel L."/>
            <person name="Macedo J."/>
            <person name="Alves-Ferreira M."/>
            <person name="Sachetto-Martins G."/>
            <person name="Coelho A."/>
            <person name="Santos E."/>
            <person name="Amaral G."/>
            <person name="Neves A."/>
            <person name="Pacheco A.B."/>
            <person name="Carvalho D."/>
            <person name="Lery L."/>
            <person name="Bisch P."/>
            <person name="Rossle S.C."/>
            <person name="Urmenyi T."/>
            <person name="Rael Pereira A."/>
            <person name="Silva R."/>
            <person name="Rondinelli E."/>
            <person name="von Kruger W."/>
            <person name="Martins O."/>
            <person name="Baldani J.I."/>
            <person name="Ferreira P.C."/>
        </authorList>
    </citation>
    <scope>NUCLEOTIDE SEQUENCE [LARGE SCALE GENOMIC DNA]</scope>
    <source>
        <strain>ATCC 49037 / DSM 5601 / CCUG 37298 / CIP 103539 / LMG 7603 / PAl5</strain>
    </source>
</reference>
<reference key="2">
    <citation type="journal article" date="2010" name="Stand. Genomic Sci.">
        <title>Two genome sequences of the same bacterial strain, Gluconacetobacter diazotrophicus PAl 5, suggest a new standard in genome sequence submission.</title>
        <authorList>
            <person name="Giongo A."/>
            <person name="Tyler H.L."/>
            <person name="Zipperer U.N."/>
            <person name="Triplett E.W."/>
        </authorList>
    </citation>
    <scope>NUCLEOTIDE SEQUENCE [LARGE SCALE GENOMIC DNA]</scope>
    <source>
        <strain>ATCC 49037 / DSM 5601 / CCUG 37298 / CIP 103539 / LMG 7603 / PAl5</strain>
    </source>
</reference>
<gene>
    <name evidence="1" type="primary">nuoN</name>
    <name type="ordered locus">GDI3028</name>
    <name type="ordered locus">Gdia_3340</name>
</gene>
<name>NUON_GLUDA</name>
<comment type="function">
    <text evidence="1">NDH-1 shuttles electrons from NADH, via FMN and iron-sulfur (Fe-S) centers, to quinones in the respiratory chain. The immediate electron acceptor for the enzyme in this species is believed to be ubiquinone. Couples the redox reaction to proton translocation (for every two electrons transferred, four hydrogen ions are translocated across the cytoplasmic membrane), and thus conserves the redox energy in a proton gradient.</text>
</comment>
<comment type="catalytic activity">
    <reaction evidence="1">
        <text>a quinone + NADH + 5 H(+)(in) = a quinol + NAD(+) + 4 H(+)(out)</text>
        <dbReference type="Rhea" id="RHEA:57888"/>
        <dbReference type="ChEBI" id="CHEBI:15378"/>
        <dbReference type="ChEBI" id="CHEBI:24646"/>
        <dbReference type="ChEBI" id="CHEBI:57540"/>
        <dbReference type="ChEBI" id="CHEBI:57945"/>
        <dbReference type="ChEBI" id="CHEBI:132124"/>
    </reaction>
</comment>
<comment type="subunit">
    <text evidence="1">NDH-1 is composed of 14 different subunits. Subunits NuoA, H, J, K, L, M, N constitute the membrane sector of the complex.</text>
</comment>
<comment type="subcellular location">
    <subcellularLocation>
        <location evidence="1">Cell inner membrane</location>
        <topology evidence="1">Multi-pass membrane protein</topology>
    </subcellularLocation>
</comment>
<comment type="similarity">
    <text evidence="1">Belongs to the complex I subunit 2 family.</text>
</comment>
<accession>A9HRS3</accession>
<evidence type="ECO:0000255" key="1">
    <source>
        <dbReference type="HAMAP-Rule" id="MF_00445"/>
    </source>
</evidence>